<reference key="1">
    <citation type="journal article" date="2004" name="Nature">
        <title>Genome evolution in yeasts.</title>
        <authorList>
            <person name="Dujon B."/>
            <person name="Sherman D."/>
            <person name="Fischer G."/>
            <person name="Durrens P."/>
            <person name="Casaregola S."/>
            <person name="Lafontaine I."/>
            <person name="de Montigny J."/>
            <person name="Marck C."/>
            <person name="Neuveglise C."/>
            <person name="Talla E."/>
            <person name="Goffard N."/>
            <person name="Frangeul L."/>
            <person name="Aigle M."/>
            <person name="Anthouard V."/>
            <person name="Babour A."/>
            <person name="Barbe V."/>
            <person name="Barnay S."/>
            <person name="Blanchin S."/>
            <person name="Beckerich J.-M."/>
            <person name="Beyne E."/>
            <person name="Bleykasten C."/>
            <person name="Boisrame A."/>
            <person name="Boyer J."/>
            <person name="Cattolico L."/>
            <person name="Confanioleri F."/>
            <person name="de Daruvar A."/>
            <person name="Despons L."/>
            <person name="Fabre E."/>
            <person name="Fairhead C."/>
            <person name="Ferry-Dumazet H."/>
            <person name="Groppi A."/>
            <person name="Hantraye F."/>
            <person name="Hennequin C."/>
            <person name="Jauniaux N."/>
            <person name="Joyet P."/>
            <person name="Kachouri R."/>
            <person name="Kerrest A."/>
            <person name="Koszul R."/>
            <person name="Lemaire M."/>
            <person name="Lesur I."/>
            <person name="Ma L."/>
            <person name="Muller H."/>
            <person name="Nicaud J.-M."/>
            <person name="Nikolski M."/>
            <person name="Oztas S."/>
            <person name="Ozier-Kalogeropoulos O."/>
            <person name="Pellenz S."/>
            <person name="Potier S."/>
            <person name="Richard G.-F."/>
            <person name="Straub M.-L."/>
            <person name="Suleau A."/>
            <person name="Swennen D."/>
            <person name="Tekaia F."/>
            <person name="Wesolowski-Louvel M."/>
            <person name="Westhof E."/>
            <person name="Wirth B."/>
            <person name="Zeniou-Meyer M."/>
            <person name="Zivanovic Y."/>
            <person name="Bolotin-Fukuhara M."/>
            <person name="Thierry A."/>
            <person name="Bouchier C."/>
            <person name="Caudron B."/>
            <person name="Scarpelli C."/>
            <person name="Gaillardin C."/>
            <person name="Weissenbach J."/>
            <person name="Wincker P."/>
            <person name="Souciet J.-L."/>
        </authorList>
    </citation>
    <scope>NUCLEOTIDE SEQUENCE [LARGE SCALE GENOMIC DNA]</scope>
    <source>
        <strain>ATCC 8585 / CBS 2359 / DSM 70799 / NBRC 1267 / NRRL Y-1140 / WM37</strain>
    </source>
</reference>
<accession>Q6CN95</accession>
<sequence>MAVDLRPETWTVSSNEALNLSLVDENGAVNFKPTFTYPIYGDSEQIFGYKNLQIFLAFDSITFKPFVNVKYDAKLNNEIEDVQKLLLDKLPEDDVIIKDEEAWIKTFTKEQETFALPEKDKLVEEYEIGDQEFVIYRVSLQDPAIKMLHKRMQIFTLLFIESASYIDENDSSWEIFIVFNKNSKKCIGYTTTYQFWKYLGAQSFDSSKADEQKCRAKISQFLIMPPYQGHGHGKRLYQAIVKQWMNDLSVVEITVEDPNESFDDLRDRCDFERVINKNSLADCPNELPINIDWITKKQAQLKLEKRQFMRILEMFLLYQKSPNYRLQLKKRIYEKNFEALMDMDESLKKDKLQTAFQSLTEDYNRILSKVAIRKRTFSDSQGESDKRLKA</sequence>
<protein>
    <recommendedName>
        <fullName>Histone acetyltransferase type B catalytic subunit</fullName>
        <ecNumber evidence="3">2.3.1.48</ecNumber>
    </recommendedName>
</protein>
<name>HAT1_KLULA</name>
<dbReference type="EC" id="2.3.1.48" evidence="3"/>
<dbReference type="EMBL" id="CR382125">
    <property type="protein sequence ID" value="CAG99681.1"/>
    <property type="molecule type" value="Genomic_DNA"/>
</dbReference>
<dbReference type="RefSeq" id="XP_454594.1">
    <property type="nucleotide sequence ID" value="XM_454594.1"/>
</dbReference>
<dbReference type="SMR" id="Q6CN95"/>
<dbReference type="FunCoup" id="Q6CN95">
    <property type="interactions" value="1226"/>
</dbReference>
<dbReference type="STRING" id="284590.Q6CN95"/>
<dbReference type="PaxDb" id="284590-Q6CN95"/>
<dbReference type="KEGG" id="kla:KLLA0_E14301g"/>
<dbReference type="eggNOG" id="KOG2696">
    <property type="taxonomic scope" value="Eukaryota"/>
</dbReference>
<dbReference type="HOGENOM" id="CLU_036024_2_1_1"/>
<dbReference type="InParanoid" id="Q6CN95"/>
<dbReference type="OMA" id="WTCDAND"/>
<dbReference type="Proteomes" id="UP000000598">
    <property type="component" value="Chromosome E"/>
</dbReference>
<dbReference type="GO" id="GO:0000781">
    <property type="term" value="C:chromosome, telomeric region"/>
    <property type="evidence" value="ECO:0007669"/>
    <property type="project" value="GOC"/>
</dbReference>
<dbReference type="GO" id="GO:0005737">
    <property type="term" value="C:cytoplasm"/>
    <property type="evidence" value="ECO:0007669"/>
    <property type="project" value="UniProtKB-SubCell"/>
</dbReference>
<dbReference type="GO" id="GO:0005634">
    <property type="term" value="C:nucleus"/>
    <property type="evidence" value="ECO:0007669"/>
    <property type="project" value="UniProtKB-SubCell"/>
</dbReference>
<dbReference type="GO" id="GO:0004402">
    <property type="term" value="F:histone acetyltransferase activity"/>
    <property type="evidence" value="ECO:0007669"/>
    <property type="project" value="UniProtKB-EC"/>
</dbReference>
<dbReference type="GO" id="GO:0042393">
    <property type="term" value="F:histone binding"/>
    <property type="evidence" value="ECO:0007669"/>
    <property type="project" value="InterPro"/>
</dbReference>
<dbReference type="GO" id="GO:0006281">
    <property type="term" value="P:DNA repair"/>
    <property type="evidence" value="ECO:0007669"/>
    <property type="project" value="UniProtKB-KW"/>
</dbReference>
<dbReference type="GO" id="GO:0031509">
    <property type="term" value="P:subtelomeric heterochromatin formation"/>
    <property type="evidence" value="ECO:0007669"/>
    <property type="project" value="InterPro"/>
</dbReference>
<dbReference type="FunFam" id="3.40.630.30:FF:000114">
    <property type="entry name" value="Histone acetyltransferase type B catalytic subunit"/>
    <property type="match status" value="1"/>
</dbReference>
<dbReference type="Gene3D" id="1.10.10.390">
    <property type="match status" value="1"/>
</dbReference>
<dbReference type="Gene3D" id="3.40.630.30">
    <property type="match status" value="1"/>
</dbReference>
<dbReference type="Gene3D" id="3.90.360.10">
    <property type="entry name" value="Histone acetyl transferase 1 (HAT1), N-terminal domain"/>
    <property type="match status" value="1"/>
</dbReference>
<dbReference type="InterPro" id="IPR016181">
    <property type="entry name" value="Acyl_CoA_acyltransferase"/>
</dbReference>
<dbReference type="InterPro" id="IPR000182">
    <property type="entry name" value="GNAT_dom"/>
</dbReference>
<dbReference type="InterPro" id="IPR019467">
    <property type="entry name" value="Hat1_N"/>
</dbReference>
<dbReference type="InterPro" id="IPR037113">
    <property type="entry name" value="Hat1_N_sf"/>
</dbReference>
<dbReference type="InterPro" id="IPR017380">
    <property type="entry name" value="Hist_AcTrfase_B-typ_cat-su"/>
</dbReference>
<dbReference type="InterPro" id="IPR013523">
    <property type="entry name" value="Hist_AcTrfase_HAT1_C"/>
</dbReference>
<dbReference type="PANTHER" id="PTHR12046">
    <property type="entry name" value="HISTONE ACETYLTRANSFERASE TYPE B CATALYTIC SUBUNIT"/>
    <property type="match status" value="1"/>
</dbReference>
<dbReference type="Pfam" id="PF00583">
    <property type="entry name" value="Acetyltransf_1"/>
    <property type="match status" value="1"/>
</dbReference>
<dbReference type="Pfam" id="PF21184">
    <property type="entry name" value="HAT1_C_fung"/>
    <property type="match status" value="1"/>
</dbReference>
<dbReference type="Pfam" id="PF10394">
    <property type="entry name" value="Hat1_N"/>
    <property type="match status" value="1"/>
</dbReference>
<dbReference type="PIRSF" id="PIRSF038084">
    <property type="entry name" value="HAT-B_cat"/>
    <property type="match status" value="1"/>
</dbReference>
<dbReference type="SUPFAM" id="SSF55729">
    <property type="entry name" value="Acyl-CoA N-acyltransferases (Nat)"/>
    <property type="match status" value="1"/>
</dbReference>
<dbReference type="PROSITE" id="PS51186">
    <property type="entry name" value="GNAT"/>
    <property type="match status" value="1"/>
</dbReference>
<proteinExistence type="inferred from homology"/>
<gene>
    <name type="primary">HAT1</name>
    <name type="ordered locus">KLLA0E14344g</name>
</gene>
<comment type="function">
    <text evidence="3">Catalytic component of the histone acetylase B (HAT-B) complex. Acetylates 'Lys-12' of histone H4 which is required for telomeric silencing. Has intrinsic substrate specificity that modifies lysine in recognition sequence GXGKXG. Involved in DNA double-strand break repair.</text>
</comment>
<comment type="catalytic activity">
    <reaction evidence="3">
        <text>L-lysyl-[protein] + acetyl-CoA = N(6)-acetyl-L-lysyl-[protein] + CoA + H(+)</text>
        <dbReference type="Rhea" id="RHEA:45948"/>
        <dbReference type="Rhea" id="RHEA-COMP:9752"/>
        <dbReference type="Rhea" id="RHEA-COMP:10731"/>
        <dbReference type="ChEBI" id="CHEBI:15378"/>
        <dbReference type="ChEBI" id="CHEBI:29969"/>
        <dbReference type="ChEBI" id="CHEBI:57287"/>
        <dbReference type="ChEBI" id="CHEBI:57288"/>
        <dbReference type="ChEBI" id="CHEBI:61930"/>
        <dbReference type="EC" id="2.3.1.48"/>
    </reaction>
</comment>
<comment type="subunit">
    <text evidence="3">Component of the HAT-B complex composed of at least HAT1 and HAT2. The HAT-B complex binds to histone H4 tail.</text>
</comment>
<comment type="subcellular location">
    <subcellularLocation>
        <location evidence="1">Cytoplasm</location>
    </subcellularLocation>
    <subcellularLocation>
        <location evidence="1">Nucleus</location>
    </subcellularLocation>
</comment>
<comment type="similarity">
    <text evidence="5">Belongs to the HAT1 family.</text>
</comment>
<organism>
    <name type="scientific">Kluyveromyces lactis (strain ATCC 8585 / CBS 2359 / DSM 70799 / NBRC 1267 / NRRL Y-1140 / WM37)</name>
    <name type="common">Yeast</name>
    <name type="synonym">Candida sphaerica</name>
    <dbReference type="NCBI Taxonomy" id="284590"/>
    <lineage>
        <taxon>Eukaryota</taxon>
        <taxon>Fungi</taxon>
        <taxon>Dikarya</taxon>
        <taxon>Ascomycota</taxon>
        <taxon>Saccharomycotina</taxon>
        <taxon>Saccharomycetes</taxon>
        <taxon>Saccharomycetales</taxon>
        <taxon>Saccharomycetaceae</taxon>
        <taxon>Kluyveromyces</taxon>
    </lineage>
</organism>
<evidence type="ECO:0000250" key="1"/>
<evidence type="ECO:0000250" key="2">
    <source>
        <dbReference type="UniProtKB" id="O14929"/>
    </source>
</evidence>
<evidence type="ECO:0000250" key="3">
    <source>
        <dbReference type="UniProtKB" id="Q12341"/>
    </source>
</evidence>
<evidence type="ECO:0000255" key="4">
    <source>
        <dbReference type="PROSITE-ProRule" id="PRU00532"/>
    </source>
</evidence>
<evidence type="ECO:0000305" key="5"/>
<keyword id="KW-0012">Acyltransferase</keyword>
<keyword id="KW-0156">Chromatin regulator</keyword>
<keyword id="KW-0963">Cytoplasm</keyword>
<keyword id="KW-0227">DNA damage</keyword>
<keyword id="KW-0234">DNA repair</keyword>
<keyword id="KW-0539">Nucleus</keyword>
<keyword id="KW-1185">Reference proteome</keyword>
<keyword id="KW-0808">Transferase</keyword>
<feature type="chain" id="PRO_0000227725" description="Histone acetyltransferase type B catalytic subunit">
    <location>
        <begin position="1"/>
        <end position="390"/>
    </location>
</feature>
<feature type="domain" description="N-acetyltransferase" evidence="4">
    <location>
        <begin position="138"/>
        <end position="290"/>
    </location>
</feature>
<feature type="region of interest" description="Interaction with histone H4 N-terminus" evidence="3">
    <location>
        <begin position="42"/>
        <end position="44"/>
    </location>
</feature>
<feature type="region of interest" description="Interaction with histone H4 N-terminus" evidence="3">
    <location>
        <begin position="193"/>
        <end position="195"/>
    </location>
</feature>
<feature type="active site" description="Proton donor/acceptor" evidence="3">
    <location>
        <position position="256"/>
    </location>
</feature>
<feature type="binding site" evidence="3">
    <location>
        <begin position="221"/>
        <end position="223"/>
    </location>
    <ligand>
        <name>acetyl-CoA</name>
        <dbReference type="ChEBI" id="CHEBI:57288"/>
    </ligand>
</feature>
<feature type="binding site" evidence="3">
    <location>
        <begin position="228"/>
        <end position="234"/>
    </location>
    <ligand>
        <name>acetyl-CoA</name>
        <dbReference type="ChEBI" id="CHEBI:57288"/>
    </ligand>
</feature>
<feature type="site" description="Interaction with histone H4 N-terminus" evidence="2">
    <location>
        <position position="173"/>
    </location>
</feature>